<comment type="function">
    <text evidence="1">Catalyzes the formation of S-adenosylmethionine (AdoMet) from methionine and ATP. The overall synthetic reaction is composed of two sequential steps, AdoMet formation and the subsequent tripolyphosphate hydrolysis which occurs prior to release of AdoMet from the enzyme.</text>
</comment>
<comment type="catalytic activity">
    <reaction evidence="1">
        <text>L-methionine + ATP + H2O = S-adenosyl-L-methionine + phosphate + diphosphate</text>
        <dbReference type="Rhea" id="RHEA:21080"/>
        <dbReference type="ChEBI" id="CHEBI:15377"/>
        <dbReference type="ChEBI" id="CHEBI:30616"/>
        <dbReference type="ChEBI" id="CHEBI:33019"/>
        <dbReference type="ChEBI" id="CHEBI:43474"/>
        <dbReference type="ChEBI" id="CHEBI:57844"/>
        <dbReference type="ChEBI" id="CHEBI:59789"/>
        <dbReference type="EC" id="2.5.1.6"/>
    </reaction>
</comment>
<comment type="cofactor">
    <cofactor evidence="1">
        <name>Mg(2+)</name>
        <dbReference type="ChEBI" id="CHEBI:18420"/>
    </cofactor>
    <text evidence="1">Binds 2 divalent ions per subunit.</text>
</comment>
<comment type="cofactor">
    <cofactor evidence="1">
        <name>K(+)</name>
        <dbReference type="ChEBI" id="CHEBI:29103"/>
    </cofactor>
    <text evidence="1">Binds 1 potassium ion per subunit.</text>
</comment>
<comment type="pathway">
    <text evidence="1">Amino-acid biosynthesis; S-adenosyl-L-methionine biosynthesis; S-adenosyl-L-methionine from L-methionine: step 1/1.</text>
</comment>
<comment type="subunit">
    <text evidence="1">Homotetramer; dimer of dimers.</text>
</comment>
<comment type="subcellular location">
    <subcellularLocation>
        <location evidence="1">Cytoplasm</location>
    </subcellularLocation>
</comment>
<comment type="similarity">
    <text evidence="1">Belongs to the AdoMet synthase family.</text>
</comment>
<feature type="chain" id="PRO_0000174565" description="S-adenosylmethionine synthase">
    <location>
        <begin position="1"/>
        <end position="390"/>
    </location>
</feature>
<feature type="region of interest" description="Flexible loop" evidence="1">
    <location>
        <begin position="99"/>
        <end position="109"/>
    </location>
</feature>
<feature type="binding site" description="in other chain" evidence="1">
    <location>
        <position position="15"/>
    </location>
    <ligand>
        <name>ATP</name>
        <dbReference type="ChEBI" id="CHEBI:30616"/>
        <note>ligand shared between two neighboring subunits</note>
    </ligand>
</feature>
<feature type="binding site" evidence="1">
    <location>
        <position position="17"/>
    </location>
    <ligand>
        <name>Mg(2+)</name>
        <dbReference type="ChEBI" id="CHEBI:18420"/>
    </ligand>
</feature>
<feature type="binding site" evidence="1">
    <location>
        <position position="43"/>
    </location>
    <ligand>
        <name>K(+)</name>
        <dbReference type="ChEBI" id="CHEBI:29103"/>
    </ligand>
</feature>
<feature type="binding site" description="in other chain" evidence="1">
    <location>
        <position position="56"/>
    </location>
    <ligand>
        <name>L-methionine</name>
        <dbReference type="ChEBI" id="CHEBI:57844"/>
        <note>ligand shared between two neighboring subunits</note>
    </ligand>
</feature>
<feature type="binding site" description="in other chain" evidence="1">
    <location>
        <position position="99"/>
    </location>
    <ligand>
        <name>L-methionine</name>
        <dbReference type="ChEBI" id="CHEBI:57844"/>
        <note>ligand shared between two neighboring subunits</note>
    </ligand>
</feature>
<feature type="binding site" description="in other chain" evidence="1">
    <location>
        <begin position="164"/>
        <end position="166"/>
    </location>
    <ligand>
        <name>ATP</name>
        <dbReference type="ChEBI" id="CHEBI:30616"/>
        <note>ligand shared between two neighboring subunits</note>
    </ligand>
</feature>
<feature type="binding site" description="in other chain" evidence="1">
    <location>
        <begin position="230"/>
        <end position="231"/>
    </location>
    <ligand>
        <name>ATP</name>
        <dbReference type="ChEBI" id="CHEBI:30616"/>
        <note>ligand shared between two neighboring subunits</note>
    </ligand>
</feature>
<feature type="binding site" evidence="1">
    <location>
        <position position="239"/>
    </location>
    <ligand>
        <name>ATP</name>
        <dbReference type="ChEBI" id="CHEBI:30616"/>
        <note>ligand shared between two neighboring subunits</note>
    </ligand>
</feature>
<feature type="binding site" evidence="1">
    <location>
        <position position="239"/>
    </location>
    <ligand>
        <name>L-methionine</name>
        <dbReference type="ChEBI" id="CHEBI:57844"/>
        <note>ligand shared between two neighboring subunits</note>
    </ligand>
</feature>
<feature type="binding site" description="in other chain" evidence="1">
    <location>
        <begin position="245"/>
        <end position="246"/>
    </location>
    <ligand>
        <name>ATP</name>
        <dbReference type="ChEBI" id="CHEBI:30616"/>
        <note>ligand shared between two neighboring subunits</note>
    </ligand>
</feature>
<feature type="binding site" evidence="1">
    <location>
        <position position="262"/>
    </location>
    <ligand>
        <name>ATP</name>
        <dbReference type="ChEBI" id="CHEBI:30616"/>
        <note>ligand shared between two neighboring subunits</note>
    </ligand>
</feature>
<feature type="binding site" evidence="1">
    <location>
        <position position="266"/>
    </location>
    <ligand>
        <name>ATP</name>
        <dbReference type="ChEBI" id="CHEBI:30616"/>
        <note>ligand shared between two neighboring subunits</note>
    </ligand>
</feature>
<feature type="binding site" description="in other chain" evidence="1">
    <location>
        <position position="270"/>
    </location>
    <ligand>
        <name>L-methionine</name>
        <dbReference type="ChEBI" id="CHEBI:57844"/>
        <note>ligand shared between two neighboring subunits</note>
    </ligand>
</feature>
<protein>
    <recommendedName>
        <fullName evidence="1">S-adenosylmethionine synthase</fullName>
        <shortName evidence="1">AdoMet synthase</shortName>
        <ecNumber evidence="1">2.5.1.6</ecNumber>
    </recommendedName>
    <alternativeName>
        <fullName evidence="1">MAT</fullName>
    </alternativeName>
    <alternativeName>
        <fullName evidence="1">Methionine adenosyltransferase</fullName>
    </alternativeName>
</protein>
<dbReference type="EC" id="2.5.1.6" evidence="1"/>
<dbReference type="EMBL" id="BX571871">
    <property type="protein sequence ID" value="CAE16056.1"/>
    <property type="molecule type" value="Genomic_DNA"/>
</dbReference>
<dbReference type="RefSeq" id="WP_011147846.1">
    <property type="nucleotide sequence ID" value="NC_005126.1"/>
</dbReference>
<dbReference type="SMR" id="Q7N119"/>
<dbReference type="STRING" id="243265.plu3683"/>
<dbReference type="GeneID" id="88806445"/>
<dbReference type="KEGG" id="plu:plu3683"/>
<dbReference type="eggNOG" id="COG0192">
    <property type="taxonomic scope" value="Bacteria"/>
</dbReference>
<dbReference type="HOGENOM" id="CLU_041802_1_1_6"/>
<dbReference type="OrthoDB" id="9801686at2"/>
<dbReference type="UniPathway" id="UPA00315">
    <property type="reaction ID" value="UER00080"/>
</dbReference>
<dbReference type="Proteomes" id="UP000002514">
    <property type="component" value="Chromosome"/>
</dbReference>
<dbReference type="GO" id="GO:0005737">
    <property type="term" value="C:cytoplasm"/>
    <property type="evidence" value="ECO:0007669"/>
    <property type="project" value="UniProtKB-SubCell"/>
</dbReference>
<dbReference type="GO" id="GO:0005524">
    <property type="term" value="F:ATP binding"/>
    <property type="evidence" value="ECO:0007669"/>
    <property type="project" value="UniProtKB-UniRule"/>
</dbReference>
<dbReference type="GO" id="GO:0000287">
    <property type="term" value="F:magnesium ion binding"/>
    <property type="evidence" value="ECO:0007669"/>
    <property type="project" value="UniProtKB-UniRule"/>
</dbReference>
<dbReference type="GO" id="GO:0004478">
    <property type="term" value="F:methionine adenosyltransferase activity"/>
    <property type="evidence" value="ECO:0007669"/>
    <property type="project" value="UniProtKB-UniRule"/>
</dbReference>
<dbReference type="GO" id="GO:0006730">
    <property type="term" value="P:one-carbon metabolic process"/>
    <property type="evidence" value="ECO:0007669"/>
    <property type="project" value="UniProtKB-KW"/>
</dbReference>
<dbReference type="GO" id="GO:0006556">
    <property type="term" value="P:S-adenosylmethionine biosynthetic process"/>
    <property type="evidence" value="ECO:0007669"/>
    <property type="project" value="UniProtKB-UniRule"/>
</dbReference>
<dbReference type="CDD" id="cd18079">
    <property type="entry name" value="S-AdoMet_synt"/>
    <property type="match status" value="1"/>
</dbReference>
<dbReference type="FunFam" id="3.30.300.10:FF:000001">
    <property type="entry name" value="S-adenosylmethionine synthase"/>
    <property type="match status" value="1"/>
</dbReference>
<dbReference type="FunFam" id="3.30.300.10:FF:000003">
    <property type="entry name" value="S-adenosylmethionine synthase"/>
    <property type="match status" value="1"/>
</dbReference>
<dbReference type="Gene3D" id="3.30.300.10">
    <property type="match status" value="3"/>
</dbReference>
<dbReference type="HAMAP" id="MF_00086">
    <property type="entry name" value="S_AdoMet_synth1"/>
    <property type="match status" value="1"/>
</dbReference>
<dbReference type="InterPro" id="IPR022631">
    <property type="entry name" value="ADOMET_SYNTHASE_CS"/>
</dbReference>
<dbReference type="InterPro" id="IPR022630">
    <property type="entry name" value="S-AdoMet_synt_C"/>
</dbReference>
<dbReference type="InterPro" id="IPR022629">
    <property type="entry name" value="S-AdoMet_synt_central"/>
</dbReference>
<dbReference type="InterPro" id="IPR022628">
    <property type="entry name" value="S-AdoMet_synt_N"/>
</dbReference>
<dbReference type="InterPro" id="IPR002133">
    <property type="entry name" value="S-AdoMet_synthetase"/>
</dbReference>
<dbReference type="InterPro" id="IPR022636">
    <property type="entry name" value="S-AdoMet_synthetase_sfam"/>
</dbReference>
<dbReference type="NCBIfam" id="TIGR01034">
    <property type="entry name" value="metK"/>
    <property type="match status" value="1"/>
</dbReference>
<dbReference type="PANTHER" id="PTHR11964">
    <property type="entry name" value="S-ADENOSYLMETHIONINE SYNTHETASE"/>
    <property type="match status" value="1"/>
</dbReference>
<dbReference type="Pfam" id="PF02773">
    <property type="entry name" value="S-AdoMet_synt_C"/>
    <property type="match status" value="1"/>
</dbReference>
<dbReference type="Pfam" id="PF02772">
    <property type="entry name" value="S-AdoMet_synt_M"/>
    <property type="match status" value="1"/>
</dbReference>
<dbReference type="Pfam" id="PF00438">
    <property type="entry name" value="S-AdoMet_synt_N"/>
    <property type="match status" value="1"/>
</dbReference>
<dbReference type="PIRSF" id="PIRSF000497">
    <property type="entry name" value="MAT"/>
    <property type="match status" value="1"/>
</dbReference>
<dbReference type="SUPFAM" id="SSF55973">
    <property type="entry name" value="S-adenosylmethionine synthetase"/>
    <property type="match status" value="3"/>
</dbReference>
<dbReference type="PROSITE" id="PS00376">
    <property type="entry name" value="ADOMET_SYNTHASE_1"/>
    <property type="match status" value="1"/>
</dbReference>
<dbReference type="PROSITE" id="PS00377">
    <property type="entry name" value="ADOMET_SYNTHASE_2"/>
    <property type="match status" value="1"/>
</dbReference>
<accession>Q7N119</accession>
<reference key="1">
    <citation type="journal article" date="2003" name="Nat. Biotechnol.">
        <title>The genome sequence of the entomopathogenic bacterium Photorhabdus luminescens.</title>
        <authorList>
            <person name="Duchaud E."/>
            <person name="Rusniok C."/>
            <person name="Frangeul L."/>
            <person name="Buchrieser C."/>
            <person name="Givaudan A."/>
            <person name="Taourit S."/>
            <person name="Bocs S."/>
            <person name="Boursaux-Eude C."/>
            <person name="Chandler M."/>
            <person name="Charles J.-F."/>
            <person name="Dassa E."/>
            <person name="Derose R."/>
            <person name="Derzelle S."/>
            <person name="Freyssinet G."/>
            <person name="Gaudriault S."/>
            <person name="Medigue C."/>
            <person name="Lanois A."/>
            <person name="Powell K."/>
            <person name="Siguier P."/>
            <person name="Vincent R."/>
            <person name="Wingate V."/>
            <person name="Zouine M."/>
            <person name="Glaser P."/>
            <person name="Boemare N."/>
            <person name="Danchin A."/>
            <person name="Kunst F."/>
        </authorList>
    </citation>
    <scope>NUCLEOTIDE SEQUENCE [LARGE SCALE GENOMIC DNA]</scope>
    <source>
        <strain>DSM 15139 / CIP 105565 / TT01</strain>
    </source>
</reference>
<sequence>MTTYLFTSESVSEGHPDKIADQISDAVLDAILEQDPKARVACETYVKTGMVMVGGEITTSAWVDIEEITRQTVREIGYVNSEMGFDANSCAVLSAIGKQSPDINQGVDREDPLQQGAGDQGLMFGYATNETDVLMPAPITYAHRLVQRQAEVRKNGVLPWLRPDAKSQVTFQYNNDKIVGVDAVVLSTQHAENISQKDLQEAVMEEIIKPVLPAEWLNPTTKYFINPTGRFVIGGPMGDCGLTGRKIIVDTYGGMARHGGGAFSGKDPSKVDRSAAYAARYVAKNIVAAGLADRCEIQVSYAIGVAEPTSIMVETFGTEKVSTATLTLLVREFFDLRPHGLIQMLDLLHPIYRDTAAYGHFGRPQFPWEATDKAEALRDAAGLKLSAMNM</sequence>
<name>METK_PHOLL</name>
<evidence type="ECO:0000255" key="1">
    <source>
        <dbReference type="HAMAP-Rule" id="MF_00086"/>
    </source>
</evidence>
<gene>
    <name evidence="1" type="primary">metK</name>
    <name type="ordered locus">plu3683</name>
</gene>
<organism>
    <name type="scientific">Photorhabdus laumondii subsp. laumondii (strain DSM 15139 / CIP 105565 / TT01)</name>
    <name type="common">Photorhabdus luminescens subsp. laumondii</name>
    <dbReference type="NCBI Taxonomy" id="243265"/>
    <lineage>
        <taxon>Bacteria</taxon>
        <taxon>Pseudomonadati</taxon>
        <taxon>Pseudomonadota</taxon>
        <taxon>Gammaproteobacteria</taxon>
        <taxon>Enterobacterales</taxon>
        <taxon>Morganellaceae</taxon>
        <taxon>Photorhabdus</taxon>
    </lineage>
</organism>
<keyword id="KW-0067">ATP-binding</keyword>
<keyword id="KW-0963">Cytoplasm</keyword>
<keyword id="KW-0460">Magnesium</keyword>
<keyword id="KW-0479">Metal-binding</keyword>
<keyword id="KW-0547">Nucleotide-binding</keyword>
<keyword id="KW-0554">One-carbon metabolism</keyword>
<keyword id="KW-0630">Potassium</keyword>
<keyword id="KW-1185">Reference proteome</keyword>
<keyword id="KW-0808">Transferase</keyword>
<proteinExistence type="inferred from homology"/>